<reference key="1">
    <citation type="journal article" date="2004" name="J. Infect. Dis.">
        <title>Progress toward characterization of the group A Streptococcus metagenome: complete genome sequence of a macrolide-resistant serotype M6 strain.</title>
        <authorList>
            <person name="Banks D.J."/>
            <person name="Porcella S.F."/>
            <person name="Barbian K.D."/>
            <person name="Beres S.B."/>
            <person name="Philips L.E."/>
            <person name="Voyich J.M."/>
            <person name="DeLeo F.R."/>
            <person name="Martin J.M."/>
            <person name="Somerville G.A."/>
            <person name="Musser J.M."/>
        </authorList>
    </citation>
    <scope>NUCLEOTIDE SEQUENCE [LARGE SCALE GENOMIC DNA]</scope>
    <source>
        <strain>ATCC BAA-946 / MGAS10394</strain>
    </source>
</reference>
<accession>Q5XCA5</accession>
<proteinExistence type="inferred from homology"/>
<sequence>MITELHGIDIRENEPLKHYTYTKVGGPADFLAFPRNHYELSRIVAYANKENMPWLVLGNASNLIVRDGGIRGFVIMFDKLNAVHLNGYTLEAEAGANLIETTKIAKFHSLTGFEFACGIPGSIGGAVFMNAGAYGGEISHIFLSAKVLTSSGEIKTISARDMAFGYRHSAIQETGDIVISAKFALKPGNYDTISQEMNRLNHLRQLKQPLEFPSCGSVFKRPPGHFAGQLIMEANLKGHRIGGVEVSEKHAGFMINVADGTAKDYEDLIAYVIETVENHSGVRLEPEVRIIGENL</sequence>
<organism>
    <name type="scientific">Streptococcus pyogenes serotype M6 (strain ATCC BAA-946 / MGAS10394)</name>
    <dbReference type="NCBI Taxonomy" id="286636"/>
    <lineage>
        <taxon>Bacteria</taxon>
        <taxon>Bacillati</taxon>
        <taxon>Bacillota</taxon>
        <taxon>Bacilli</taxon>
        <taxon>Lactobacillales</taxon>
        <taxon>Streptococcaceae</taxon>
        <taxon>Streptococcus</taxon>
    </lineage>
</organism>
<name>MURB_STRP6</name>
<gene>
    <name evidence="1" type="primary">murB</name>
    <name type="ordered locus">M6_Spy0823</name>
</gene>
<feature type="chain" id="PRO_0000179274" description="UDP-N-acetylenolpyruvoylglucosamine reductase">
    <location>
        <begin position="1"/>
        <end position="295"/>
    </location>
</feature>
<feature type="domain" description="FAD-binding PCMH-type" evidence="1">
    <location>
        <begin position="23"/>
        <end position="188"/>
    </location>
</feature>
<feature type="active site" evidence="1">
    <location>
        <position position="167"/>
    </location>
</feature>
<feature type="active site" description="Proton donor" evidence="1">
    <location>
        <position position="217"/>
    </location>
</feature>
<feature type="active site" evidence="1">
    <location>
        <position position="287"/>
    </location>
</feature>
<comment type="function">
    <text evidence="1">Cell wall formation.</text>
</comment>
<comment type="catalytic activity">
    <reaction evidence="1">
        <text>UDP-N-acetyl-alpha-D-muramate + NADP(+) = UDP-N-acetyl-3-O-(1-carboxyvinyl)-alpha-D-glucosamine + NADPH + H(+)</text>
        <dbReference type="Rhea" id="RHEA:12248"/>
        <dbReference type="ChEBI" id="CHEBI:15378"/>
        <dbReference type="ChEBI" id="CHEBI:57783"/>
        <dbReference type="ChEBI" id="CHEBI:58349"/>
        <dbReference type="ChEBI" id="CHEBI:68483"/>
        <dbReference type="ChEBI" id="CHEBI:70757"/>
        <dbReference type="EC" id="1.3.1.98"/>
    </reaction>
</comment>
<comment type="cofactor">
    <cofactor evidence="1">
        <name>FAD</name>
        <dbReference type="ChEBI" id="CHEBI:57692"/>
    </cofactor>
</comment>
<comment type="pathway">
    <text evidence="1">Cell wall biogenesis; peptidoglycan biosynthesis.</text>
</comment>
<comment type="subcellular location">
    <subcellularLocation>
        <location evidence="1">Cytoplasm</location>
    </subcellularLocation>
</comment>
<comment type="similarity">
    <text evidence="1">Belongs to the MurB family.</text>
</comment>
<keyword id="KW-0131">Cell cycle</keyword>
<keyword id="KW-0132">Cell division</keyword>
<keyword id="KW-0133">Cell shape</keyword>
<keyword id="KW-0961">Cell wall biogenesis/degradation</keyword>
<keyword id="KW-0963">Cytoplasm</keyword>
<keyword id="KW-0274">FAD</keyword>
<keyword id="KW-0285">Flavoprotein</keyword>
<keyword id="KW-0521">NADP</keyword>
<keyword id="KW-0560">Oxidoreductase</keyword>
<keyword id="KW-0573">Peptidoglycan synthesis</keyword>
<protein>
    <recommendedName>
        <fullName evidence="1">UDP-N-acetylenolpyruvoylglucosamine reductase</fullName>
        <ecNumber evidence="1">1.3.1.98</ecNumber>
    </recommendedName>
    <alternativeName>
        <fullName evidence="1">UDP-N-acetylmuramate dehydrogenase</fullName>
    </alternativeName>
</protein>
<evidence type="ECO:0000255" key="1">
    <source>
        <dbReference type="HAMAP-Rule" id="MF_00037"/>
    </source>
</evidence>
<dbReference type="EC" id="1.3.1.98" evidence="1"/>
<dbReference type="EMBL" id="CP000003">
    <property type="protein sequence ID" value="AAT86958.1"/>
    <property type="molecule type" value="Genomic_DNA"/>
</dbReference>
<dbReference type="RefSeq" id="WP_002995339.1">
    <property type="nucleotide sequence ID" value="NC_006086.1"/>
</dbReference>
<dbReference type="SMR" id="Q5XCA5"/>
<dbReference type="GeneID" id="69900907"/>
<dbReference type="KEGG" id="spa:M6_Spy0823"/>
<dbReference type="HOGENOM" id="CLU_035304_1_1_9"/>
<dbReference type="UniPathway" id="UPA00219"/>
<dbReference type="Proteomes" id="UP000001167">
    <property type="component" value="Chromosome"/>
</dbReference>
<dbReference type="GO" id="GO:0005829">
    <property type="term" value="C:cytosol"/>
    <property type="evidence" value="ECO:0007669"/>
    <property type="project" value="TreeGrafter"/>
</dbReference>
<dbReference type="GO" id="GO:0071949">
    <property type="term" value="F:FAD binding"/>
    <property type="evidence" value="ECO:0007669"/>
    <property type="project" value="InterPro"/>
</dbReference>
<dbReference type="GO" id="GO:0008762">
    <property type="term" value="F:UDP-N-acetylmuramate dehydrogenase activity"/>
    <property type="evidence" value="ECO:0007669"/>
    <property type="project" value="UniProtKB-UniRule"/>
</dbReference>
<dbReference type="GO" id="GO:0051301">
    <property type="term" value="P:cell division"/>
    <property type="evidence" value="ECO:0007669"/>
    <property type="project" value="UniProtKB-KW"/>
</dbReference>
<dbReference type="GO" id="GO:0071555">
    <property type="term" value="P:cell wall organization"/>
    <property type="evidence" value="ECO:0007669"/>
    <property type="project" value="UniProtKB-KW"/>
</dbReference>
<dbReference type="GO" id="GO:0009252">
    <property type="term" value="P:peptidoglycan biosynthetic process"/>
    <property type="evidence" value="ECO:0007669"/>
    <property type="project" value="UniProtKB-UniRule"/>
</dbReference>
<dbReference type="GO" id="GO:0008360">
    <property type="term" value="P:regulation of cell shape"/>
    <property type="evidence" value="ECO:0007669"/>
    <property type="project" value="UniProtKB-KW"/>
</dbReference>
<dbReference type="Gene3D" id="3.30.465.10">
    <property type="match status" value="1"/>
</dbReference>
<dbReference type="Gene3D" id="3.90.78.10">
    <property type="entry name" value="UDP-N-acetylenolpyruvoylglucosamine reductase, C-terminal domain"/>
    <property type="match status" value="1"/>
</dbReference>
<dbReference type="Gene3D" id="3.30.43.10">
    <property type="entry name" value="Uridine Diphospho-n-acetylenolpyruvylglucosamine Reductase, domain 2"/>
    <property type="match status" value="1"/>
</dbReference>
<dbReference type="HAMAP" id="MF_00037">
    <property type="entry name" value="MurB"/>
    <property type="match status" value="1"/>
</dbReference>
<dbReference type="InterPro" id="IPR016166">
    <property type="entry name" value="FAD-bd_PCMH"/>
</dbReference>
<dbReference type="InterPro" id="IPR036318">
    <property type="entry name" value="FAD-bd_PCMH-like_sf"/>
</dbReference>
<dbReference type="InterPro" id="IPR016167">
    <property type="entry name" value="FAD-bd_PCMH_sub1"/>
</dbReference>
<dbReference type="InterPro" id="IPR016169">
    <property type="entry name" value="FAD-bd_PCMH_sub2"/>
</dbReference>
<dbReference type="InterPro" id="IPR003170">
    <property type="entry name" value="MurB"/>
</dbReference>
<dbReference type="InterPro" id="IPR011601">
    <property type="entry name" value="MurB_C"/>
</dbReference>
<dbReference type="InterPro" id="IPR036635">
    <property type="entry name" value="MurB_C_sf"/>
</dbReference>
<dbReference type="InterPro" id="IPR006094">
    <property type="entry name" value="Oxid_FAD_bind_N"/>
</dbReference>
<dbReference type="NCBIfam" id="TIGR00179">
    <property type="entry name" value="murB"/>
    <property type="match status" value="1"/>
</dbReference>
<dbReference type="NCBIfam" id="NF010480">
    <property type="entry name" value="PRK13905.1"/>
    <property type="match status" value="1"/>
</dbReference>
<dbReference type="PANTHER" id="PTHR21071">
    <property type="entry name" value="UDP-N-ACETYLENOLPYRUVOYLGLUCOSAMINE REDUCTASE"/>
    <property type="match status" value="1"/>
</dbReference>
<dbReference type="PANTHER" id="PTHR21071:SF4">
    <property type="entry name" value="UDP-N-ACETYLENOLPYRUVOYLGLUCOSAMINE REDUCTASE"/>
    <property type="match status" value="1"/>
</dbReference>
<dbReference type="Pfam" id="PF01565">
    <property type="entry name" value="FAD_binding_4"/>
    <property type="match status" value="1"/>
</dbReference>
<dbReference type="Pfam" id="PF02873">
    <property type="entry name" value="MurB_C"/>
    <property type="match status" value="1"/>
</dbReference>
<dbReference type="SUPFAM" id="SSF56176">
    <property type="entry name" value="FAD-binding/transporter-associated domain-like"/>
    <property type="match status" value="1"/>
</dbReference>
<dbReference type="SUPFAM" id="SSF56194">
    <property type="entry name" value="Uridine diphospho-N-Acetylenolpyruvylglucosamine reductase, MurB, C-terminal domain"/>
    <property type="match status" value="1"/>
</dbReference>
<dbReference type="PROSITE" id="PS51387">
    <property type="entry name" value="FAD_PCMH"/>
    <property type="match status" value="1"/>
</dbReference>